<organism>
    <name type="scientific">Salmonella typhimurium (strain LT2 / SGSC1412 / ATCC 700720)</name>
    <dbReference type="NCBI Taxonomy" id="99287"/>
    <lineage>
        <taxon>Bacteria</taxon>
        <taxon>Pseudomonadati</taxon>
        <taxon>Pseudomonadota</taxon>
        <taxon>Gammaproteobacteria</taxon>
        <taxon>Enterobacterales</taxon>
        <taxon>Enterobacteriaceae</taxon>
        <taxon>Salmonella</taxon>
    </lineage>
</organism>
<sequence length="164" mass="18218">MKMFVPAVVFAALASASAWANNGDTAQPLEKIAPYPQAEKGMKRQVITLTPQQDESTLKVELLIGQTLNVDCNQHRLGGTLETKTLEGWGYDYYVFDNVTSPVSTMMACPEGKKEQKFVTAWLGEDGMLRYNSKLPIVVYTPANVDVKYRIWKADANVQNAVAR</sequence>
<evidence type="ECO:0000255" key="1">
    <source>
        <dbReference type="HAMAP-Rule" id="MF_00706"/>
    </source>
</evidence>
<proteinExistence type="inferred from homology"/>
<feature type="signal peptide" evidence="1">
    <location>
        <begin position="1"/>
        <end position="20"/>
    </location>
</feature>
<feature type="chain" id="PRO_0000007431" description="Ecotin">
    <location>
        <begin position="21"/>
        <end position="164"/>
    </location>
</feature>
<feature type="site" description="Reactive bond" evidence="1">
    <location>
        <begin position="106"/>
        <end position="107"/>
    </location>
</feature>
<feature type="disulfide bond" evidence="1">
    <location>
        <begin position="72"/>
        <end position="109"/>
    </location>
</feature>
<comment type="function">
    <text evidence="1">General inhibitor of pancreatic serine proteases: inhibits chymotrypsin, trypsin, elastases, factor X, kallikrein as well as a variety of other proteases.</text>
</comment>
<comment type="subunit">
    <text evidence="1">Homodimer.</text>
</comment>
<comment type="subcellular location">
    <subcellularLocation>
        <location evidence="1">Periplasm</location>
    </subcellularLocation>
</comment>
<comment type="similarity">
    <text evidence="1">Belongs to the protease inhibitor I11 (ecotin) family.</text>
</comment>
<reference key="1">
    <citation type="journal article" date="2001" name="Nature">
        <title>Complete genome sequence of Salmonella enterica serovar Typhimurium LT2.</title>
        <authorList>
            <person name="McClelland M."/>
            <person name="Sanderson K.E."/>
            <person name="Spieth J."/>
            <person name="Clifton S.W."/>
            <person name="Latreille P."/>
            <person name="Courtney L."/>
            <person name="Porwollik S."/>
            <person name="Ali J."/>
            <person name="Dante M."/>
            <person name="Du F."/>
            <person name="Hou S."/>
            <person name="Layman D."/>
            <person name="Leonard S."/>
            <person name="Nguyen C."/>
            <person name="Scott K."/>
            <person name="Holmes A."/>
            <person name="Grewal N."/>
            <person name="Mulvaney E."/>
            <person name="Ryan E."/>
            <person name="Sun H."/>
            <person name="Florea L."/>
            <person name="Miller W."/>
            <person name="Stoneking T."/>
            <person name="Nhan M."/>
            <person name="Waterston R."/>
            <person name="Wilson R.K."/>
        </authorList>
    </citation>
    <scope>NUCLEOTIDE SEQUENCE [LARGE SCALE GENOMIC DNA]</scope>
    <source>
        <strain>LT2 / SGSC1412 / ATCC 700720</strain>
    </source>
</reference>
<keyword id="KW-1015">Disulfide bond</keyword>
<keyword id="KW-0574">Periplasm</keyword>
<keyword id="KW-0646">Protease inhibitor</keyword>
<keyword id="KW-1185">Reference proteome</keyword>
<keyword id="KW-0722">Serine protease inhibitor</keyword>
<keyword id="KW-0732">Signal</keyword>
<dbReference type="EMBL" id="AE006468">
    <property type="protein sequence ID" value="AAL21164.1"/>
    <property type="molecule type" value="Genomic_DNA"/>
</dbReference>
<dbReference type="RefSeq" id="NP_461205.1">
    <property type="nucleotide sequence ID" value="NC_003197.2"/>
</dbReference>
<dbReference type="RefSeq" id="WP_000781589.1">
    <property type="nucleotide sequence ID" value="NC_003197.2"/>
</dbReference>
<dbReference type="SMR" id="Q8ZNH4"/>
<dbReference type="STRING" id="99287.STM2262"/>
<dbReference type="MEROPS" id="I11.001"/>
<dbReference type="PaxDb" id="99287-STM2262"/>
<dbReference type="GeneID" id="1253784"/>
<dbReference type="KEGG" id="stm:STM2262"/>
<dbReference type="PATRIC" id="fig|99287.12.peg.2396"/>
<dbReference type="HOGENOM" id="CLU_111565_0_0_6"/>
<dbReference type="OMA" id="PKAEKGM"/>
<dbReference type="PhylomeDB" id="Q8ZNH4"/>
<dbReference type="BioCyc" id="SENT99287:STM2262-MONOMER"/>
<dbReference type="Proteomes" id="UP000001014">
    <property type="component" value="Chromosome"/>
</dbReference>
<dbReference type="GO" id="GO:0030288">
    <property type="term" value="C:outer membrane-bounded periplasmic space"/>
    <property type="evidence" value="ECO:0000318"/>
    <property type="project" value="GO_Central"/>
</dbReference>
<dbReference type="GO" id="GO:0004867">
    <property type="term" value="F:serine-type endopeptidase inhibitor activity"/>
    <property type="evidence" value="ECO:0000318"/>
    <property type="project" value="GO_Central"/>
</dbReference>
<dbReference type="CDD" id="cd00242">
    <property type="entry name" value="Ecotin"/>
    <property type="match status" value="1"/>
</dbReference>
<dbReference type="FunFam" id="2.60.40.550:FF:000001">
    <property type="entry name" value="Ecotin"/>
    <property type="match status" value="1"/>
</dbReference>
<dbReference type="FunFam" id="4.10.1230.10:FF:000001">
    <property type="entry name" value="Ecotin"/>
    <property type="match status" value="1"/>
</dbReference>
<dbReference type="Gene3D" id="2.60.40.550">
    <property type="entry name" value="Ecotin"/>
    <property type="match status" value="1"/>
</dbReference>
<dbReference type="Gene3D" id="4.10.1230.10">
    <property type="entry name" value="Ecotin, trypsin inhibitor"/>
    <property type="match status" value="1"/>
</dbReference>
<dbReference type="HAMAP" id="MF_00706">
    <property type="entry name" value="Ecotin"/>
    <property type="match status" value="1"/>
</dbReference>
<dbReference type="InterPro" id="IPR027438">
    <property type="entry name" value="Ecotin_C"/>
</dbReference>
<dbReference type="InterPro" id="IPR036198">
    <property type="entry name" value="Ecotin_sf"/>
</dbReference>
<dbReference type="InterPro" id="IPR005658">
    <property type="entry name" value="Prot_inh_ecotin"/>
</dbReference>
<dbReference type="InterPro" id="IPR023084">
    <property type="entry name" value="Prot_inh_ecotin_gammaproteobac"/>
</dbReference>
<dbReference type="NCBIfam" id="NF002987">
    <property type="entry name" value="PRK03719.1"/>
    <property type="match status" value="1"/>
</dbReference>
<dbReference type="PANTHER" id="PTHR35890">
    <property type="match status" value="1"/>
</dbReference>
<dbReference type="PANTHER" id="PTHR35890:SF3">
    <property type="entry name" value="ECOTIN"/>
    <property type="match status" value="1"/>
</dbReference>
<dbReference type="Pfam" id="PF03974">
    <property type="entry name" value="Ecotin"/>
    <property type="match status" value="1"/>
</dbReference>
<dbReference type="PIRSF" id="PIRSF006865">
    <property type="entry name" value="Prot_inh_ecotin"/>
    <property type="match status" value="1"/>
</dbReference>
<dbReference type="SUPFAM" id="SSF49772">
    <property type="entry name" value="Ecotin, trypsin inhibitor"/>
    <property type="match status" value="1"/>
</dbReference>
<name>ECOT_SALTY</name>
<accession>Q8ZNH4</accession>
<protein>
    <recommendedName>
        <fullName evidence="1">Ecotin</fullName>
    </recommendedName>
</protein>
<gene>
    <name evidence="1" type="primary">eco</name>
    <name type="ordered locus">STM2262</name>
</gene>